<name>CLCN1_CANLF</name>
<feature type="chain" id="PRO_0000094428" description="Chloride channel protein 1">
    <location>
        <begin position="1"/>
        <end position="976"/>
    </location>
</feature>
<feature type="topological domain" description="Cytoplasmic" evidence="9">
    <location>
        <begin position="1"/>
        <end position="118"/>
    </location>
</feature>
<feature type="transmembrane region" description="Helical" evidence="2">
    <location>
        <begin position="119"/>
        <end position="150"/>
    </location>
</feature>
<feature type="topological domain" description="Extracellular" evidence="9">
    <location>
        <begin position="151"/>
        <end position="158"/>
    </location>
</feature>
<feature type="transmembrane region" description="Helical" evidence="2">
    <location>
        <begin position="159"/>
        <end position="179"/>
    </location>
</feature>
<feature type="topological domain" description="Cytoplasmic" evidence="9">
    <location>
        <begin position="180"/>
        <end position="183"/>
    </location>
</feature>
<feature type="intramembrane region" description="Note=Loop between two helices" evidence="2">
    <location>
        <begin position="184"/>
        <end position="189"/>
    </location>
</feature>
<feature type="intramembrane region" description="Helical" evidence="2">
    <location>
        <begin position="190"/>
        <end position="195"/>
    </location>
</feature>
<feature type="topological domain" description="Cytoplasmic" evidence="9">
    <location>
        <begin position="196"/>
        <end position="208"/>
    </location>
</feature>
<feature type="intramembrane region" description="Helical" evidence="2">
    <location>
        <begin position="209"/>
        <end position="224"/>
    </location>
</feature>
<feature type="intramembrane region" description="Note=Loop between two helices" evidence="2">
    <location>
        <begin position="225"/>
        <end position="230"/>
    </location>
</feature>
<feature type="intramembrane region" description="Helical" evidence="2">
    <location>
        <begin position="231"/>
        <end position="246"/>
    </location>
</feature>
<feature type="topological domain" description="Cytoplasmic" evidence="9">
    <location>
        <begin position="247"/>
        <end position="268"/>
    </location>
</feature>
<feature type="intramembrane region" description="Helical" evidence="2">
    <location>
        <begin position="269"/>
        <end position="280"/>
    </location>
</feature>
<feature type="intramembrane region" description="Helical" evidence="2">
    <location>
        <begin position="281"/>
        <end position="290"/>
    </location>
</feature>
<feature type="topological domain" description="Cytoplasmic" evidence="9">
    <location>
        <begin position="291"/>
        <end position="301"/>
    </location>
</feature>
<feature type="transmembrane region" description="Helical" evidence="2">
    <location>
        <begin position="302"/>
        <end position="321"/>
    </location>
</feature>
<feature type="topological domain" description="Extracellular" evidence="9">
    <location>
        <begin position="322"/>
        <end position="347"/>
    </location>
</feature>
<feature type="transmembrane region" description="Helical" evidence="2">
    <location>
        <begin position="348"/>
        <end position="376"/>
    </location>
</feature>
<feature type="topological domain" description="Cytoplasmic" evidence="9">
    <location>
        <begin position="377"/>
        <end position="390"/>
    </location>
</feature>
<feature type="transmembrane region" description="Helical" evidence="2">
    <location>
        <begin position="391"/>
        <end position="408"/>
    </location>
</feature>
<feature type="topological domain" description="Extracellular" evidence="9">
    <location>
        <begin position="409"/>
        <end position="414"/>
    </location>
</feature>
<feature type="intramembrane region" description="Note=Loop between two helices" evidence="2">
    <location>
        <begin position="415"/>
        <end position="418"/>
    </location>
</feature>
<feature type="intramembrane region" description="Helical" evidence="2">
    <location>
        <begin position="419"/>
        <end position="426"/>
    </location>
</feature>
<feature type="topological domain" description="Extracellular" evidence="9">
    <location>
        <begin position="427"/>
        <end position="457"/>
    </location>
</feature>
<feature type="intramembrane region" description="Helical" evidence="2">
    <location>
        <begin position="458"/>
        <end position="475"/>
    </location>
</feature>
<feature type="intramembrane region" description="Note=Loop between two helices" evidence="2">
    <location>
        <begin position="476"/>
        <end position="482"/>
    </location>
</feature>
<feature type="intramembrane region" description="Helical" evidence="2">
    <location>
        <begin position="483"/>
        <end position="498"/>
    </location>
</feature>
<feature type="topological domain" description="Extracellular" evidence="9">
    <location>
        <begin position="499"/>
        <end position="521"/>
    </location>
</feature>
<feature type="intramembrane region" description="Helical" evidence="2">
    <location>
        <begin position="522"/>
        <end position="538"/>
    </location>
</feature>
<feature type="intramembrane region" description="Note=Loop between two helices" evidence="2">
    <location>
        <begin position="539"/>
        <end position="540"/>
    </location>
</feature>
<feature type="intramembrane region" description="Helical" evidence="2">
    <location>
        <begin position="541"/>
        <end position="554"/>
    </location>
</feature>
<feature type="topological domain" description="Extracellular" evidence="9">
    <location>
        <begin position="555"/>
        <end position="557"/>
    </location>
</feature>
<feature type="intramembrane region" description="Helical" evidence="2">
    <location>
        <begin position="558"/>
        <end position="571"/>
    </location>
</feature>
<feature type="intramembrane region" description="Note=Loop between two helices" evidence="2">
    <location>
        <begin position="572"/>
        <end position="575"/>
    </location>
</feature>
<feature type="intramembrane region" description="Helical" evidence="2">
    <location>
        <begin position="576"/>
        <end position="578"/>
    </location>
</feature>
<feature type="topological domain" description="Cytoplasmic" evidence="9">
    <location>
        <begin position="579"/>
        <end position="976"/>
    </location>
</feature>
<feature type="domain" description="CBS 1" evidence="6">
    <location>
        <begin position="609"/>
        <end position="668"/>
    </location>
</feature>
<feature type="domain" description="CBS 2" evidence="6">
    <location>
        <begin position="816"/>
        <end position="871"/>
    </location>
</feature>
<feature type="region of interest" description="Disordered" evidence="7">
    <location>
        <begin position="71"/>
        <end position="92"/>
    </location>
</feature>
<feature type="region of interest" description="Disordered" evidence="7">
    <location>
        <begin position="707"/>
        <end position="759"/>
    </location>
</feature>
<feature type="region of interest" description="Disordered" evidence="7">
    <location>
        <begin position="872"/>
        <end position="976"/>
    </location>
</feature>
<feature type="short sequence motif" description="Selectivity filter part_1" evidence="1">
    <location>
        <begin position="188"/>
        <end position="192"/>
    </location>
</feature>
<feature type="short sequence motif" description="Selectivity filter part_2" evidence="1">
    <location>
        <begin position="230"/>
        <end position="234"/>
    </location>
</feature>
<feature type="short sequence motif" description="Selectivity filter part_3" evidence="1">
    <location>
        <begin position="482"/>
        <end position="486"/>
    </location>
</feature>
<feature type="compositionally biased region" description="Low complexity" evidence="7">
    <location>
        <begin position="77"/>
        <end position="87"/>
    </location>
</feature>
<feature type="compositionally biased region" description="Pro residues" evidence="7">
    <location>
        <begin position="719"/>
        <end position="731"/>
    </location>
</feature>
<feature type="compositionally biased region" description="Pro residues" evidence="7">
    <location>
        <begin position="914"/>
        <end position="925"/>
    </location>
</feature>
<feature type="compositionally biased region" description="Acidic residues" evidence="7">
    <location>
        <begin position="938"/>
        <end position="955"/>
    </location>
</feature>
<feature type="compositionally biased region" description="Acidic residues" evidence="7">
    <location>
        <begin position="967"/>
        <end position="976"/>
    </location>
</feature>
<feature type="binding site" evidence="3">
    <location>
        <position position="189"/>
    </location>
    <ligand>
        <name>chloride</name>
        <dbReference type="ChEBI" id="CHEBI:17996"/>
    </ligand>
</feature>
<feature type="binding site" evidence="3">
    <location>
        <position position="484"/>
    </location>
    <ligand>
        <name>chloride</name>
        <dbReference type="ChEBI" id="CHEBI:17996"/>
    </ligand>
</feature>
<feature type="binding site" evidence="3">
    <location>
        <position position="578"/>
    </location>
    <ligand>
        <name>chloride</name>
        <dbReference type="ChEBI" id="CHEBI:17996"/>
    </ligand>
</feature>
<feature type="site" description="Protopore gate" evidence="2">
    <location>
        <position position="232"/>
    </location>
</feature>
<feature type="modified residue" description="Phosphoserine" evidence="4">
    <location>
        <position position="881"/>
    </location>
</feature>
<feature type="sequence variant" description="In MCR; profound effect on the voltage-dependence of activation such that mutant channels have a greatly reduced open probability at voltages near the resting membrane potential of skeletal muscle." evidence="8">
    <original>T</original>
    <variation>M</variation>
    <location>
        <position position="268"/>
    </location>
</feature>
<sequence>MQPSQSLRRGGEQSWWGSAPQYQYMPFEHCTSYGLPSENGALQHRLHRDAGLRANTRPTQIYGHYKQQFSDKEQDTGMSKKMGSSESMDSKDEDHYSKCQGCVRRLGHVVRRKLGEDWIFLVLLGLLMALVSWSMDYVSAKSLQAYKWSYYQMQPNLPLQYLVWVTFPLTLILFSAVFCHLISPQAVGSGIPEMKTILRGVILKEYLTLKAFVAKVVALTAGLGSGIPVGKEGPFVHIASICAAVLSKFMSMFCGVYEQPYYYTDMLTVGCAVGVGCCFGTPLGGVLFSIEVTSTYFAVRNYWRGFFAATFSAFVFRVLAVWNKDAVTITALFRTNFRMDFPFDLQELPAFAIIGICCGFLGAVFVYLHRQVMLGVRKHKALSQFLAKHRLLYPGIVTFIIASFTFPPGIGQFMAGELMPREAISTLFDNNTWVKHVGDPESLGRSAVWIHPRVNVIIIIFLFFIMKFWMSIVATTMPIPCGGFMPVFVLGAAFGRLVGEIMAMLFPDGILFDDIIYKILPGGYAVIGAAALTGAVSHTVSTAVICFELTGQIAHILPMMVAVILANMVAQSLQPSLYDSIIQVKKLPYLPDLGWNQLSKFTIFVEDIMVRDVKFVSATCTYGELRTLLQTTTVKTLPLVDSKDSMILLGSVERSELQSLLQRHLGPERRLRVAQDMARKLSELPYDGKGHQGISPEGRRESFAFVDEDEDEDLSGKPELPPLPPPHPLPSAPLSSEESNGPLPSHKQQPEAPEPADQRPSVFRSLLRCLLGRPRPTKKKTTQESMDLVDNMSPEEIEAWEQEQLSQPVCFDYCCIDQSPFQLVEQTSLHKTHTLFSLLGLHLAYVTSMGKLRGVLALEELQKAIEGHTKSGVQLRPPLASFRSTTSTRKNPGGPPPPTEAWSLPEDGTGAPASPEPPAPSPSPAPLLSEAPAKVEGELEELELGESPGLEEELADILQGPSLRSTDEEDEDELIL</sequence>
<evidence type="ECO:0000250" key="1"/>
<evidence type="ECO:0000250" key="2">
    <source>
        <dbReference type="UniProtKB" id="P35523"/>
    </source>
</evidence>
<evidence type="ECO:0000250" key="3">
    <source>
        <dbReference type="UniProtKB" id="P37019"/>
    </source>
</evidence>
<evidence type="ECO:0000250" key="4">
    <source>
        <dbReference type="UniProtKB" id="Q64347"/>
    </source>
</evidence>
<evidence type="ECO:0000255" key="5"/>
<evidence type="ECO:0000255" key="6">
    <source>
        <dbReference type="PROSITE-ProRule" id="PRU00703"/>
    </source>
</evidence>
<evidence type="ECO:0000256" key="7">
    <source>
        <dbReference type="SAM" id="MobiDB-lite"/>
    </source>
</evidence>
<evidence type="ECO:0000269" key="8">
    <source>
    </source>
</evidence>
<evidence type="ECO:0000305" key="9"/>
<evidence type="ECO:0000305" key="10">
    <source>
    </source>
</evidence>
<organism>
    <name type="scientific">Canis lupus familiaris</name>
    <name type="common">Dog</name>
    <name type="synonym">Canis familiaris</name>
    <dbReference type="NCBI Taxonomy" id="9615"/>
    <lineage>
        <taxon>Eukaryota</taxon>
        <taxon>Metazoa</taxon>
        <taxon>Chordata</taxon>
        <taxon>Craniata</taxon>
        <taxon>Vertebrata</taxon>
        <taxon>Euteleostomi</taxon>
        <taxon>Mammalia</taxon>
        <taxon>Eutheria</taxon>
        <taxon>Laurasiatheria</taxon>
        <taxon>Carnivora</taxon>
        <taxon>Caniformia</taxon>
        <taxon>Canidae</taxon>
        <taxon>Canis</taxon>
    </lineage>
</organism>
<reference key="1">
    <citation type="journal article" date="1999" name="FEBS Lett.">
        <title>A missense mutation in canine C1C-1 causes recessive myotonia congenita in the dog.</title>
        <authorList>
            <person name="Rhodes T.H."/>
            <person name="Vite C.H."/>
            <person name="Giger U."/>
            <person name="Patterson D.F."/>
            <person name="Fahlke C."/>
            <person name="George A.L. Jr."/>
        </authorList>
    </citation>
    <scope>NUCLEOTIDE SEQUENCE [MRNA]</scope>
    <scope>VARIANT MCR MET-268</scope>
    <scope>INVOLVEMENT IN MCR</scope>
    <scope>FUNCTION</scope>
    <scope>TRANSPORTER ACTIVITY</scope>
    <scope>SUBCELLULAR LOCATION</scope>
    <scope>SUBUNIT</scope>
    <source>
        <strain>Miniature Schnauzer</strain>
    </source>
</reference>
<comment type="function">
    <text evidence="2 8">Voltage-gated chloride channel involved in skeletal muscle excitability. Generates most of the plasma membrane chloride conductance in skeletal muscle fibers, stabilizes the resting membrane potential and contributes to the repolarization phase during action potential firing (By similarity) (PubMed:10452529). Forms a homodimeric channel where each subunit has its own ion conduction pathway. Conducts double-barreled currents controlled by two types of gates, two fast glutamate gates that control each subunit independently and a slow common gate that opens and shuts off both subunits simultaneously. Has a significant open probability at muscle resting potential and is further activated upon membrane depolarization (By similarity). Permeable to small monovalent anions with ion selectivity for chloride &gt; thiocyanate &gt; bromide &gt; nitrate &gt; iodide (By similarity).</text>
</comment>
<comment type="catalytic activity">
    <reaction evidence="8">
        <text>chloride(in) = chloride(out)</text>
        <dbReference type="Rhea" id="RHEA:29823"/>
        <dbReference type="ChEBI" id="CHEBI:17996"/>
    </reaction>
</comment>
<comment type="catalytic activity">
    <reaction evidence="2">
        <text>thiocyanate(in) = thiocyanate(out)</text>
        <dbReference type="Rhea" id="RHEA:75347"/>
        <dbReference type="ChEBI" id="CHEBI:18022"/>
    </reaction>
</comment>
<comment type="catalytic activity">
    <reaction evidence="2">
        <text>bromide(in) = bromide(out)</text>
        <dbReference type="Rhea" id="RHEA:75383"/>
        <dbReference type="ChEBI" id="CHEBI:15858"/>
    </reaction>
</comment>
<comment type="catalytic activity">
    <reaction evidence="2">
        <text>nitrate(in) = nitrate(out)</text>
        <dbReference type="Rhea" id="RHEA:34923"/>
        <dbReference type="ChEBI" id="CHEBI:17632"/>
    </reaction>
</comment>
<comment type="catalytic activity">
    <reaction evidence="2">
        <text>iodide(out) = iodide(in)</text>
        <dbReference type="Rhea" id="RHEA:66324"/>
        <dbReference type="ChEBI" id="CHEBI:16382"/>
    </reaction>
</comment>
<comment type="activity regulation">
    <text evidence="2">Modulated by membrane voltage with depolarization favouring channel opening and hyperpolarization favouring channel closure. Inhibited by acidic pH and ATP binding due to a shift of voltage dependence of common gating to more positive voltages. Inhibited by 9-anthracene-carboxylic.</text>
</comment>
<comment type="subunit">
    <text evidence="10">Homodimer.</text>
</comment>
<comment type="subcellular location">
    <subcellularLocation>
        <location evidence="8">Cell membrane</location>
        <topology evidence="5">Multi-pass membrane protein</topology>
    </subcellularLocation>
    <subcellularLocation>
        <location evidence="4">Cell membrane</location>
        <location evidence="4">Sarcolemma</location>
        <topology evidence="5">Multi-pass membrane protein</topology>
    </subcellularLocation>
    <subcellularLocation>
        <location evidence="4">Cell membrane</location>
        <location evidence="4">Sarcolemma</location>
        <location evidence="4">T-tubule</location>
        <topology evidence="5">Multi-pass membrane protein</topology>
    </subcellularLocation>
</comment>
<comment type="disease">
    <text evidence="8">Defects in CLCN1 are the cause of autosomal recessive myotonia congenita (MCR). MCR is a disorder of sarcolemmal excitation leading to delayed relaxation of skeletal muscle following contractions. The disease has been identified in the miniature Schnauzer breed.</text>
</comment>
<comment type="miscellaneous">
    <text evidence="2">Each monomer is composed of 18 alpha helices arranged in an internal pseudo-symmetry with an inverted membrane orientation. Most helices do not traverse the membrane completely.</text>
</comment>
<comment type="similarity">
    <text evidence="9">Belongs to the chloride channel (TC 2.A.49) family. ClC-1/CLCN1 subfamily.</text>
</comment>
<proteinExistence type="evidence at protein level"/>
<accession>Q9MZT1</accession>
<gene>
    <name type="primary">CLCN1</name>
</gene>
<dbReference type="EMBL" id="AF162445">
    <property type="protein sequence ID" value="AAF82606.1"/>
    <property type="molecule type" value="mRNA"/>
</dbReference>
<dbReference type="RefSeq" id="NP_001003124.1">
    <property type="nucleotide sequence ID" value="NM_001003124.2"/>
</dbReference>
<dbReference type="SMR" id="Q9MZT1"/>
<dbReference type="FunCoup" id="Q9MZT1">
    <property type="interactions" value="9"/>
</dbReference>
<dbReference type="STRING" id="9615.ENSCAFP00000018866"/>
<dbReference type="PaxDb" id="9612-ENSCAFP00000018866"/>
<dbReference type="Ensembl" id="ENSCAFT00000020333.4">
    <property type="protein sequence ID" value="ENSCAFP00000018866.3"/>
    <property type="gene ID" value="ENSCAFG00000003619.5"/>
</dbReference>
<dbReference type="Ensembl" id="ENSCAFT00030020703.1">
    <property type="protein sequence ID" value="ENSCAFP00030018053.1"/>
    <property type="gene ID" value="ENSCAFG00030011180.1"/>
</dbReference>
<dbReference type="Ensembl" id="ENSCAFT00040009316.1">
    <property type="protein sequence ID" value="ENSCAFP00040008072.1"/>
    <property type="gene ID" value="ENSCAFG00040004929.1"/>
</dbReference>
<dbReference type="Ensembl" id="ENSCAFT00845030053.1">
    <property type="protein sequence ID" value="ENSCAFP00845023575.1"/>
    <property type="gene ID" value="ENSCAFG00845016951.1"/>
</dbReference>
<dbReference type="GeneID" id="403723"/>
<dbReference type="KEGG" id="cfa:403723"/>
<dbReference type="CTD" id="1180"/>
<dbReference type="VEuPathDB" id="HostDB:ENSCAFG00845016951"/>
<dbReference type="VGNC" id="VGNC:39301">
    <property type="gene designation" value="CLCN1"/>
</dbReference>
<dbReference type="eggNOG" id="KOG0476">
    <property type="taxonomic scope" value="Eukaryota"/>
</dbReference>
<dbReference type="GeneTree" id="ENSGT00940000157383"/>
<dbReference type="HOGENOM" id="CLU_006904_0_1_1"/>
<dbReference type="InParanoid" id="Q9MZT1"/>
<dbReference type="OMA" id="KHIGDPE"/>
<dbReference type="OrthoDB" id="4564at2759"/>
<dbReference type="TreeFam" id="TF352264"/>
<dbReference type="Reactome" id="R-CFA-2672351">
    <property type="pathway name" value="Stimuli-sensing channels"/>
</dbReference>
<dbReference type="Proteomes" id="UP000002254">
    <property type="component" value="Chromosome 16"/>
</dbReference>
<dbReference type="Proteomes" id="UP000694429">
    <property type="component" value="Chromosome 16"/>
</dbReference>
<dbReference type="Proteomes" id="UP000694542">
    <property type="component" value="Chromosome 16"/>
</dbReference>
<dbReference type="Proteomes" id="UP000805418">
    <property type="component" value="Chromosome 16"/>
</dbReference>
<dbReference type="Bgee" id="ENSCAFG00000003619">
    <property type="expression patterns" value="Expressed in tongue and 29 other cell types or tissues"/>
</dbReference>
<dbReference type="GO" id="GO:0034707">
    <property type="term" value="C:chloride channel complex"/>
    <property type="evidence" value="ECO:0007669"/>
    <property type="project" value="UniProtKB-KW"/>
</dbReference>
<dbReference type="GO" id="GO:0005886">
    <property type="term" value="C:plasma membrane"/>
    <property type="evidence" value="ECO:0000250"/>
    <property type="project" value="UniProtKB"/>
</dbReference>
<dbReference type="GO" id="GO:0030315">
    <property type="term" value="C:T-tubule"/>
    <property type="evidence" value="ECO:0007669"/>
    <property type="project" value="UniProtKB-SubCell"/>
</dbReference>
<dbReference type="GO" id="GO:0042803">
    <property type="term" value="F:protein homodimerization activity"/>
    <property type="evidence" value="ECO:0000250"/>
    <property type="project" value="UniProtKB"/>
</dbReference>
<dbReference type="GO" id="GO:0005247">
    <property type="term" value="F:voltage-gated chloride channel activity"/>
    <property type="evidence" value="ECO:0000250"/>
    <property type="project" value="UniProtKB"/>
</dbReference>
<dbReference type="GO" id="GO:1902476">
    <property type="term" value="P:chloride transmembrane transport"/>
    <property type="evidence" value="ECO:0000250"/>
    <property type="project" value="UniProtKB"/>
</dbReference>
<dbReference type="GO" id="GO:0006821">
    <property type="term" value="P:chloride transport"/>
    <property type="evidence" value="ECO:0000318"/>
    <property type="project" value="GO_Central"/>
</dbReference>
<dbReference type="GO" id="GO:0006936">
    <property type="term" value="P:muscle contraction"/>
    <property type="evidence" value="ECO:0000250"/>
    <property type="project" value="UniProtKB"/>
</dbReference>
<dbReference type="GO" id="GO:0019227">
    <property type="term" value="P:neuronal action potential propagation"/>
    <property type="evidence" value="ECO:0007669"/>
    <property type="project" value="Ensembl"/>
</dbReference>
<dbReference type="CDD" id="cd04591">
    <property type="entry name" value="CBS_pair_voltage-gated_CLC_euk_bac"/>
    <property type="match status" value="1"/>
</dbReference>
<dbReference type="CDD" id="cd03683">
    <property type="entry name" value="ClC_1_like"/>
    <property type="match status" value="1"/>
</dbReference>
<dbReference type="FunFam" id="1.10.3080.10:FF:000003">
    <property type="entry name" value="Chloride channel 2"/>
    <property type="match status" value="1"/>
</dbReference>
<dbReference type="FunFam" id="3.10.580.10:FF:000027">
    <property type="entry name" value="Chloride channel protein"/>
    <property type="match status" value="1"/>
</dbReference>
<dbReference type="FunFam" id="3.10.580.10:FF:000030">
    <property type="entry name" value="Chloride channel protein"/>
    <property type="match status" value="1"/>
</dbReference>
<dbReference type="Gene3D" id="3.10.580.10">
    <property type="entry name" value="CBS-domain"/>
    <property type="match status" value="2"/>
</dbReference>
<dbReference type="Gene3D" id="1.10.3080.10">
    <property type="entry name" value="Clc chloride channel"/>
    <property type="match status" value="1"/>
</dbReference>
<dbReference type="InterPro" id="IPR000644">
    <property type="entry name" value="CBS_dom"/>
</dbReference>
<dbReference type="InterPro" id="IPR046342">
    <property type="entry name" value="CBS_dom_sf"/>
</dbReference>
<dbReference type="InterPro" id="IPR014743">
    <property type="entry name" value="Cl-channel_core"/>
</dbReference>
<dbReference type="InterPro" id="IPR002243">
    <property type="entry name" value="Cl_channel-1"/>
</dbReference>
<dbReference type="InterPro" id="IPR050970">
    <property type="entry name" value="Cl_channel_volt-gated"/>
</dbReference>
<dbReference type="InterPro" id="IPR001807">
    <property type="entry name" value="ClC"/>
</dbReference>
<dbReference type="PANTHER" id="PTHR45720:SF4">
    <property type="entry name" value="CHLORIDE CHANNEL PROTEIN 1"/>
    <property type="match status" value="1"/>
</dbReference>
<dbReference type="PANTHER" id="PTHR45720">
    <property type="entry name" value="CHLORIDE CHANNEL PROTEIN 2"/>
    <property type="match status" value="1"/>
</dbReference>
<dbReference type="Pfam" id="PF00654">
    <property type="entry name" value="Voltage_CLC"/>
    <property type="match status" value="1"/>
</dbReference>
<dbReference type="PRINTS" id="PR00762">
    <property type="entry name" value="CLCHANNEL"/>
</dbReference>
<dbReference type="PRINTS" id="PR01112">
    <property type="entry name" value="CLCHANNEL1"/>
</dbReference>
<dbReference type="SUPFAM" id="SSF54631">
    <property type="entry name" value="CBS-domain pair"/>
    <property type="match status" value="1"/>
</dbReference>
<dbReference type="SUPFAM" id="SSF81340">
    <property type="entry name" value="Clc chloride channel"/>
    <property type="match status" value="1"/>
</dbReference>
<dbReference type="PROSITE" id="PS51371">
    <property type="entry name" value="CBS"/>
    <property type="match status" value="2"/>
</dbReference>
<protein>
    <recommendedName>
        <fullName>Chloride channel protein 1</fullName>
        <shortName>ClC-1</shortName>
    </recommendedName>
    <alternativeName>
        <fullName>Chloride channel protein, skeletal muscle</fullName>
    </alternativeName>
</protein>
<keyword id="KW-0129">CBS domain</keyword>
<keyword id="KW-1003">Cell membrane</keyword>
<keyword id="KW-0868">Chloride</keyword>
<keyword id="KW-0869">Chloride channel</keyword>
<keyword id="KW-0225">Disease variant</keyword>
<keyword id="KW-0407">Ion channel</keyword>
<keyword id="KW-0406">Ion transport</keyword>
<keyword id="KW-0472">Membrane</keyword>
<keyword id="KW-0597">Phosphoprotein</keyword>
<keyword id="KW-1185">Reference proteome</keyword>
<keyword id="KW-0677">Repeat</keyword>
<keyword id="KW-0812">Transmembrane</keyword>
<keyword id="KW-1133">Transmembrane helix</keyword>
<keyword id="KW-0813">Transport</keyword>
<keyword id="KW-0851">Voltage-gated channel</keyword>